<comment type="function">
    <text evidence="2">Involved in the secondary bile acid metabolism. Catalyzes two subsequent reductions of the double bonds within the bile acid A/B rings of 3-oxochol-4,6-dien-24-oyl-CoA and 12alpha-hydroxy-3-oxochol-4,6-dien-24-oyl-CoA to yield 3-oxocholan-24-oyl-CoA and 12alpha-hydroxy-3-oxocholan-24-oyl-CoA, respectively.</text>
</comment>
<comment type="catalytic activity">
    <reaction evidence="2">
        <text>3-oxocholan-24-oyl-CoA + NAD(+) = 3-oxochol-4-en-24-oyl-CoA + NADH + H(+)</text>
        <dbReference type="Rhea" id="RHEA:31735"/>
        <dbReference type="ChEBI" id="CHEBI:15378"/>
        <dbReference type="ChEBI" id="CHEBI:57540"/>
        <dbReference type="ChEBI" id="CHEBI:57945"/>
        <dbReference type="ChEBI" id="CHEBI:86412"/>
        <dbReference type="ChEBI" id="CHEBI:136703"/>
        <dbReference type="EC" id="1.3.1.114"/>
    </reaction>
</comment>
<comment type="catalytic activity">
    <reaction evidence="2">
        <text>3-oxochol-4-en-24-oyl-CoA + NAD(+) = 3-oxochol-4,6-dien-24-oyl-CoA + NADH + H(+)</text>
        <dbReference type="Rhea" id="RHEA:56648"/>
        <dbReference type="ChEBI" id="CHEBI:15378"/>
        <dbReference type="ChEBI" id="CHEBI:57540"/>
        <dbReference type="ChEBI" id="CHEBI:57945"/>
        <dbReference type="ChEBI" id="CHEBI:86412"/>
        <dbReference type="ChEBI" id="CHEBI:140634"/>
        <dbReference type="EC" id="1.3.1.114"/>
    </reaction>
</comment>
<comment type="catalytic activity">
    <reaction evidence="2">
        <text>12alpha-hydroxy-3-oxocholan-24-oyl-CoA + NAD(+) = 12alpha-hydroxy-3-oxochol-4-en-24-oyl-CoA + NADH + H(+)</text>
        <dbReference type="Rhea" id="RHEA:56652"/>
        <dbReference type="ChEBI" id="CHEBI:15378"/>
        <dbReference type="ChEBI" id="CHEBI:57540"/>
        <dbReference type="ChEBI" id="CHEBI:57945"/>
        <dbReference type="ChEBI" id="CHEBI:136701"/>
        <dbReference type="ChEBI" id="CHEBI:140635"/>
        <dbReference type="EC" id="1.3.1.114"/>
    </reaction>
</comment>
<comment type="catalytic activity">
    <reaction evidence="2">
        <text>12alpha-hydroxy-3-oxochol-4-en-24-oyl-CoA + NAD(+) = 12alpha-hydroxy-3-oxochola-4,6-dien-24-oyl-CoA + NADH + H(+)</text>
        <dbReference type="Rhea" id="RHEA:56656"/>
        <dbReference type="ChEBI" id="CHEBI:15378"/>
        <dbReference type="ChEBI" id="CHEBI:57540"/>
        <dbReference type="ChEBI" id="CHEBI:57945"/>
        <dbReference type="ChEBI" id="CHEBI:132978"/>
        <dbReference type="ChEBI" id="CHEBI:140635"/>
        <dbReference type="EC" id="1.3.1.114"/>
    </reaction>
</comment>
<comment type="cofactor">
    <cofactor evidence="5">
        <name>FAD</name>
        <dbReference type="ChEBI" id="CHEBI:57692"/>
    </cofactor>
</comment>
<comment type="pathway">
    <text evidence="5">Lipid metabolism; bile acid degradation.</text>
</comment>
<comment type="similarity">
    <text evidence="4">Belongs to the BaiN/RdsA family. BaiN subfamily.</text>
</comment>
<dbReference type="EC" id="1.3.1.114" evidence="2"/>
<dbReference type="EMBL" id="ABFY02000009">
    <property type="protein sequence ID" value="EDS08212.1"/>
    <property type="molecule type" value="Genomic_DNA"/>
</dbReference>
<dbReference type="RefSeq" id="WP_004606074.1">
    <property type="nucleotide sequence ID" value="NZ_CP036170.1"/>
</dbReference>
<dbReference type="SMR" id="B0NAQ4"/>
<dbReference type="STRING" id="411468.CLOSCI_00523"/>
<dbReference type="GeneID" id="62697204"/>
<dbReference type="KEGG" id="ag:EDS08212"/>
<dbReference type="eggNOG" id="COG2081">
    <property type="taxonomic scope" value="Bacteria"/>
</dbReference>
<dbReference type="HOGENOM" id="CLU_025174_3_1_9"/>
<dbReference type="OrthoDB" id="9773233at2"/>
<dbReference type="BioCyc" id="MetaCyc:BAIDEL6EUBSP-MONOMER"/>
<dbReference type="BRENDA" id="1.3.1.114">
    <property type="organism ID" value="1513"/>
</dbReference>
<dbReference type="UniPathway" id="UPA00279"/>
<dbReference type="GO" id="GO:0016491">
    <property type="term" value="F:oxidoreductase activity"/>
    <property type="evidence" value="ECO:0000314"/>
    <property type="project" value="UniProtKB"/>
</dbReference>
<dbReference type="GO" id="GO:0030573">
    <property type="term" value="P:bile acid catabolic process"/>
    <property type="evidence" value="ECO:0000314"/>
    <property type="project" value="UniProtKB"/>
</dbReference>
<dbReference type="GO" id="GO:0016042">
    <property type="term" value="P:lipid catabolic process"/>
    <property type="evidence" value="ECO:0007669"/>
    <property type="project" value="UniProtKB-KW"/>
</dbReference>
<dbReference type="Gene3D" id="3.50.50.60">
    <property type="entry name" value="FAD/NAD(P)-binding domain"/>
    <property type="match status" value="1"/>
</dbReference>
<dbReference type="Gene3D" id="1.10.8.260">
    <property type="entry name" value="HI0933 insert domain-like"/>
    <property type="match status" value="1"/>
</dbReference>
<dbReference type="Gene3D" id="2.40.30.10">
    <property type="entry name" value="Translation factors"/>
    <property type="match status" value="1"/>
</dbReference>
<dbReference type="InterPro" id="IPR004792">
    <property type="entry name" value="BaiN-like"/>
</dbReference>
<dbReference type="InterPro" id="IPR055178">
    <property type="entry name" value="BaiN-like_dom"/>
</dbReference>
<dbReference type="InterPro" id="IPR023166">
    <property type="entry name" value="BaiN-like_dom_sf"/>
</dbReference>
<dbReference type="InterPro" id="IPR036188">
    <property type="entry name" value="FAD/NAD-bd_sf"/>
</dbReference>
<dbReference type="NCBIfam" id="TIGR00275">
    <property type="entry name" value="aminoacetone oxidase family FAD-binding enzyme"/>
    <property type="match status" value="1"/>
</dbReference>
<dbReference type="PANTHER" id="PTHR42887">
    <property type="entry name" value="OS12G0638800 PROTEIN"/>
    <property type="match status" value="1"/>
</dbReference>
<dbReference type="PANTHER" id="PTHR42887:SF2">
    <property type="entry name" value="OS12G0638800 PROTEIN"/>
    <property type="match status" value="1"/>
</dbReference>
<dbReference type="Pfam" id="PF03486">
    <property type="entry name" value="HI0933_like"/>
    <property type="match status" value="1"/>
</dbReference>
<dbReference type="Pfam" id="PF22780">
    <property type="entry name" value="HI0933_like_1st"/>
    <property type="match status" value="1"/>
</dbReference>
<dbReference type="PRINTS" id="PR00368">
    <property type="entry name" value="FADPNR"/>
</dbReference>
<dbReference type="SUPFAM" id="SSF51905">
    <property type="entry name" value="FAD/NAD(P)-binding domain"/>
    <property type="match status" value="1"/>
</dbReference>
<dbReference type="SUPFAM" id="SSF160996">
    <property type="entry name" value="HI0933 insert domain-like"/>
    <property type="match status" value="1"/>
</dbReference>
<keyword id="KW-0088">Bile acid catabolism</keyword>
<keyword id="KW-0274">FAD</keyword>
<keyword id="KW-0285">Flavoprotein</keyword>
<keyword id="KW-0442">Lipid degradation</keyword>
<keyword id="KW-0443">Lipid metabolism</keyword>
<keyword id="KW-0520">NAD</keyword>
<keyword id="KW-0560">Oxidoreductase</keyword>
<keyword id="KW-0753">Steroid metabolism</keyword>
<feature type="chain" id="PRO_0000445588" description="3-dehydro-bile acid delta(4,6)-reductase">
    <location>
        <begin position="1"/>
        <end position="409"/>
    </location>
</feature>
<feature type="binding site" evidence="1">
    <location>
        <position position="12"/>
    </location>
    <ligand>
        <name>FAD</name>
        <dbReference type="ChEBI" id="CHEBI:57692"/>
    </ligand>
</feature>
<feature type="binding site" evidence="1">
    <location>
        <position position="33"/>
    </location>
    <ligand>
        <name>FAD</name>
        <dbReference type="ChEBI" id="CHEBI:57692"/>
    </ligand>
</feature>
<feature type="binding site" evidence="1">
    <location>
        <position position="131"/>
    </location>
    <ligand>
        <name>FAD</name>
        <dbReference type="ChEBI" id="CHEBI:57692"/>
    </ligand>
</feature>
<feature type="binding site" evidence="1">
    <location>
        <position position="378"/>
    </location>
    <ligand>
        <name>FAD</name>
        <dbReference type="ChEBI" id="CHEBI:57692"/>
    </ligand>
</feature>
<feature type="binding site" evidence="1">
    <location>
        <position position="390"/>
    </location>
    <ligand>
        <name>FAD</name>
        <dbReference type="ChEBI" id="CHEBI:57692"/>
    </ligand>
</feature>
<feature type="binding site" evidence="1">
    <location>
        <position position="391"/>
    </location>
    <ligand>
        <name>FAD</name>
        <dbReference type="ChEBI" id="CHEBI:57692"/>
    </ligand>
</feature>
<evidence type="ECO:0000250" key="1">
    <source>
        <dbReference type="UniProtKB" id="B1PUC6"/>
    </source>
</evidence>
<evidence type="ECO:0000269" key="2">
    <source>
    </source>
</evidence>
<evidence type="ECO:0000303" key="3">
    <source>
    </source>
</evidence>
<evidence type="ECO:0000305" key="4"/>
<evidence type="ECO:0000305" key="5">
    <source>
    </source>
</evidence>
<evidence type="ECO:0000312" key="6">
    <source>
        <dbReference type="EMBL" id="EDS08212.1"/>
    </source>
</evidence>
<organism>
    <name type="scientific">Clostridium scindens (strain ATCC 35704 / DSM 5676 / VPI 13733 / 19)</name>
    <dbReference type="NCBI Taxonomy" id="411468"/>
    <lineage>
        <taxon>Bacteria</taxon>
        <taxon>Bacillati</taxon>
        <taxon>Bacillota</taxon>
        <taxon>Clostridia</taxon>
        <taxon>Lachnospirales</taxon>
        <taxon>Lachnospiraceae</taxon>
    </lineage>
</organism>
<name>BAIN_CLOS5</name>
<reference key="1">
    <citation type="submission" date="2007-11" db="EMBL/GenBank/DDBJ databases">
        <title>Draft genome sequence of Clostridium scindens(ATCC 35704).</title>
        <authorList>
            <person name="Sudarsanam P."/>
            <person name="Ley R."/>
            <person name="Guruge J."/>
            <person name="Turnbaugh P.J."/>
            <person name="Mahowald M."/>
            <person name="Liep D."/>
            <person name="Gordon J."/>
        </authorList>
    </citation>
    <scope>NUCLEOTIDE SEQUENCE [LARGE SCALE GENOMIC DNA]</scope>
    <source>
        <strain>ATCC 35704 / DSM 5676 / VPI 13733 / 19</strain>
    </source>
</reference>
<reference key="2">
    <citation type="submission" date="2007-11" db="EMBL/GenBank/DDBJ databases">
        <authorList>
            <person name="Fulton L."/>
            <person name="Clifton S."/>
            <person name="Fulton B."/>
            <person name="Xu J."/>
            <person name="Minx P."/>
            <person name="Pepin K.H."/>
            <person name="Johnson M."/>
            <person name="Thiruvilangam P."/>
            <person name="Bhonagiri V."/>
            <person name="Nash W.E."/>
            <person name="Mardis E.R."/>
            <person name="Wilson R.K."/>
        </authorList>
    </citation>
    <scope>NUCLEOTIDE SEQUENCE [LARGE SCALE GENOMIC DNA]</scope>
    <source>
        <strain>ATCC 35704 / DSM 5676 / VPI 13733 / 19</strain>
    </source>
</reference>
<reference key="3">
    <citation type="journal article" date="2018" name="Biochim. Biophys. Acta">
        <title>Identification of a gene encoding a flavoprotein involved in bile acid metabolism by the human gut bacterium Clostridium scindens ATCC 35704.</title>
        <authorList>
            <person name="Harris S.C."/>
            <person name="Devendran S."/>
            <person name="Alves J.M.P."/>
            <person name="Mythen S.M."/>
            <person name="Hylemon P.B."/>
            <person name="Ridlon J.M."/>
        </authorList>
    </citation>
    <scope>FUNCTION</scope>
    <scope>CATALYTIC ACTIVITY</scope>
    <scope>COFACTOR</scope>
    <scope>PATHWAY</scope>
    <source>
        <strain>ATCC 35704 / DSM 5676 / VPI 13733 / 19</strain>
    </source>
</reference>
<accession>B0NAQ4</accession>
<proteinExistence type="evidence at protein level"/>
<protein>
    <recommendedName>
        <fullName evidence="3">3-dehydro-bile acid delta(4,6)-reductase</fullName>
        <ecNumber evidence="2">1.3.1.114</ecNumber>
    </recommendedName>
</protein>
<gene>
    <name evidence="3" type="primary">baiN</name>
    <name evidence="6" type="ORF">CLOSCI_00523</name>
</gene>
<sequence length="409" mass="44417">MNRIGIIGGGASGIVAAIAAARSDGDAQVFILEQKENIGKKILATGNGRCNLTNEAMDASCYHGEDPEFARNVLKQFGYGETLEFFASLGLFTKSRGGYIYPRSDQAASVLELLEMELRRQKVKIYTGVRVEALKLSAKGFVIRADGQRFPADRVILACGGKASKSLGSDGSGYALARSMGHTLSPVVPALVQLKVKKHPFAKAAGVRTDAKVAALLGRQVLAEDTGEMQITAYGISGIPVFQISRHIAKGLYEGKEMKVRVDFLPEMEASQVRKAFNTHLDKCPYATCQEFLTGIFPKKLIPRLLELSHIRQNFPASELKPAQWEDLIRACKQTLLTIEDTNGFDNAQVCAGGVRTGEVYPDTLESRYADGLYLTGELLDVEGICGGYNLQWAWATGYLAGRAAAERP</sequence>